<organism>
    <name type="scientific">Aquifex aeolicus (strain VF5)</name>
    <dbReference type="NCBI Taxonomy" id="224324"/>
    <lineage>
        <taxon>Bacteria</taxon>
        <taxon>Pseudomonadati</taxon>
        <taxon>Aquificota</taxon>
        <taxon>Aquificia</taxon>
        <taxon>Aquificales</taxon>
        <taxon>Aquificaceae</taxon>
        <taxon>Aquifex</taxon>
    </lineage>
</organism>
<sequence length="192" mass="21698">MDIKLVVGLGNPGKEYEKTRHNVGFMVIDELVKALRAKGPFEEALSHVYKARIGGKEVILAKPMTYMNNSGAAVYNLLEEYKLSPEQMIVVYDDLDLPLGHMRLRLKGSSGGHRGVESIIKYIGTQNFPRLRIGIGRPKKKEDVVKYVLSPFSPEEEKVISQVIKKAVRCLMRAIEISPEHAMEYCNRQDLI</sequence>
<protein>
    <recommendedName>
        <fullName evidence="1">Peptidyl-tRNA hydrolase</fullName>
        <shortName evidence="1">Pth</shortName>
        <ecNumber evidence="1">3.1.1.29</ecNumber>
    </recommendedName>
</protein>
<feature type="chain" id="PRO_0000187681" description="Peptidyl-tRNA hydrolase">
    <location>
        <begin position="1"/>
        <end position="192"/>
    </location>
</feature>
<feature type="active site" description="Proton acceptor" evidence="1">
    <location>
        <position position="21"/>
    </location>
</feature>
<feature type="binding site" evidence="1">
    <location>
        <position position="16"/>
    </location>
    <ligand>
        <name>tRNA</name>
        <dbReference type="ChEBI" id="CHEBI:17843"/>
    </ligand>
</feature>
<feature type="binding site" evidence="1">
    <location>
        <position position="66"/>
    </location>
    <ligand>
        <name>tRNA</name>
        <dbReference type="ChEBI" id="CHEBI:17843"/>
    </ligand>
</feature>
<feature type="binding site" evidence="1">
    <location>
        <position position="68"/>
    </location>
    <ligand>
        <name>tRNA</name>
        <dbReference type="ChEBI" id="CHEBI:17843"/>
    </ligand>
</feature>
<feature type="site" description="Discriminates between blocked and unblocked aminoacyl-tRNA" evidence="1">
    <location>
        <position position="11"/>
    </location>
</feature>
<feature type="site" description="Stabilizes the basic form of H active site to accept a proton" evidence="1">
    <location>
        <position position="93"/>
    </location>
</feature>
<keyword id="KW-0963">Cytoplasm</keyword>
<keyword id="KW-0378">Hydrolase</keyword>
<keyword id="KW-1185">Reference proteome</keyword>
<keyword id="KW-0694">RNA-binding</keyword>
<keyword id="KW-0820">tRNA-binding</keyword>
<dbReference type="EC" id="3.1.1.29" evidence="1"/>
<dbReference type="EMBL" id="AE000657">
    <property type="protein sequence ID" value="AAC06642.1"/>
    <property type="molecule type" value="Genomic_DNA"/>
</dbReference>
<dbReference type="PIR" id="A70331">
    <property type="entry name" value="A70331"/>
</dbReference>
<dbReference type="RefSeq" id="NP_213237.1">
    <property type="nucleotide sequence ID" value="NC_000918.1"/>
</dbReference>
<dbReference type="RefSeq" id="WP_010880175.1">
    <property type="nucleotide sequence ID" value="NC_000918.1"/>
</dbReference>
<dbReference type="SMR" id="O66677"/>
<dbReference type="FunCoup" id="O66677">
    <property type="interactions" value="347"/>
</dbReference>
<dbReference type="STRING" id="224324.aq_346"/>
<dbReference type="EnsemblBacteria" id="AAC06642">
    <property type="protein sequence ID" value="AAC06642"/>
    <property type="gene ID" value="aq_346"/>
</dbReference>
<dbReference type="KEGG" id="aae:aq_346"/>
<dbReference type="PATRIC" id="fig|224324.8.peg.281"/>
<dbReference type="eggNOG" id="COG0193">
    <property type="taxonomic scope" value="Bacteria"/>
</dbReference>
<dbReference type="HOGENOM" id="CLU_062456_4_1_0"/>
<dbReference type="InParanoid" id="O66677"/>
<dbReference type="OrthoDB" id="9800507at2"/>
<dbReference type="Proteomes" id="UP000000798">
    <property type="component" value="Chromosome"/>
</dbReference>
<dbReference type="GO" id="GO:0005737">
    <property type="term" value="C:cytoplasm"/>
    <property type="evidence" value="ECO:0007669"/>
    <property type="project" value="UniProtKB-SubCell"/>
</dbReference>
<dbReference type="GO" id="GO:0004045">
    <property type="term" value="F:peptidyl-tRNA hydrolase activity"/>
    <property type="evidence" value="ECO:0000318"/>
    <property type="project" value="GO_Central"/>
</dbReference>
<dbReference type="GO" id="GO:0000049">
    <property type="term" value="F:tRNA binding"/>
    <property type="evidence" value="ECO:0007669"/>
    <property type="project" value="UniProtKB-UniRule"/>
</dbReference>
<dbReference type="GO" id="GO:0006515">
    <property type="term" value="P:protein quality control for misfolded or incompletely synthesized proteins"/>
    <property type="evidence" value="ECO:0007669"/>
    <property type="project" value="UniProtKB-UniRule"/>
</dbReference>
<dbReference type="GO" id="GO:0072344">
    <property type="term" value="P:rescue of stalled ribosome"/>
    <property type="evidence" value="ECO:0007669"/>
    <property type="project" value="UniProtKB-UniRule"/>
</dbReference>
<dbReference type="CDD" id="cd00462">
    <property type="entry name" value="PTH"/>
    <property type="match status" value="1"/>
</dbReference>
<dbReference type="FunFam" id="3.40.50.1470:FF:000001">
    <property type="entry name" value="Peptidyl-tRNA hydrolase"/>
    <property type="match status" value="1"/>
</dbReference>
<dbReference type="Gene3D" id="3.40.50.1470">
    <property type="entry name" value="Peptidyl-tRNA hydrolase"/>
    <property type="match status" value="1"/>
</dbReference>
<dbReference type="HAMAP" id="MF_00083">
    <property type="entry name" value="Pept_tRNA_hydro_bact"/>
    <property type="match status" value="1"/>
</dbReference>
<dbReference type="InterPro" id="IPR001328">
    <property type="entry name" value="Pept_tRNA_hydro"/>
</dbReference>
<dbReference type="InterPro" id="IPR018171">
    <property type="entry name" value="Pept_tRNA_hydro_CS"/>
</dbReference>
<dbReference type="InterPro" id="IPR036416">
    <property type="entry name" value="Pept_tRNA_hydro_sf"/>
</dbReference>
<dbReference type="NCBIfam" id="TIGR00447">
    <property type="entry name" value="pth"/>
    <property type="match status" value="1"/>
</dbReference>
<dbReference type="PANTHER" id="PTHR17224">
    <property type="entry name" value="PEPTIDYL-TRNA HYDROLASE"/>
    <property type="match status" value="1"/>
</dbReference>
<dbReference type="PANTHER" id="PTHR17224:SF1">
    <property type="entry name" value="PEPTIDYL-TRNA HYDROLASE"/>
    <property type="match status" value="1"/>
</dbReference>
<dbReference type="Pfam" id="PF01195">
    <property type="entry name" value="Pept_tRNA_hydro"/>
    <property type="match status" value="1"/>
</dbReference>
<dbReference type="SUPFAM" id="SSF53178">
    <property type="entry name" value="Peptidyl-tRNA hydrolase-like"/>
    <property type="match status" value="1"/>
</dbReference>
<dbReference type="PROSITE" id="PS01195">
    <property type="entry name" value="PEPT_TRNA_HYDROL_1"/>
    <property type="match status" value="1"/>
</dbReference>
<evidence type="ECO:0000255" key="1">
    <source>
        <dbReference type="HAMAP-Rule" id="MF_00083"/>
    </source>
</evidence>
<comment type="function">
    <text evidence="1">Hydrolyzes ribosome-free peptidyl-tRNAs (with 1 or more amino acids incorporated), which drop off the ribosome during protein synthesis, or as a result of ribosome stalling.</text>
</comment>
<comment type="function">
    <text evidence="1">Catalyzes the release of premature peptidyl moieties from peptidyl-tRNA molecules trapped in stalled 50S ribosomal subunits, and thus maintains levels of free tRNAs and 50S ribosomes.</text>
</comment>
<comment type="catalytic activity">
    <reaction evidence="1">
        <text>an N-acyl-L-alpha-aminoacyl-tRNA + H2O = an N-acyl-L-amino acid + a tRNA + H(+)</text>
        <dbReference type="Rhea" id="RHEA:54448"/>
        <dbReference type="Rhea" id="RHEA-COMP:10123"/>
        <dbReference type="Rhea" id="RHEA-COMP:13883"/>
        <dbReference type="ChEBI" id="CHEBI:15377"/>
        <dbReference type="ChEBI" id="CHEBI:15378"/>
        <dbReference type="ChEBI" id="CHEBI:59874"/>
        <dbReference type="ChEBI" id="CHEBI:78442"/>
        <dbReference type="ChEBI" id="CHEBI:138191"/>
        <dbReference type="EC" id="3.1.1.29"/>
    </reaction>
</comment>
<comment type="subunit">
    <text evidence="1">Monomer.</text>
</comment>
<comment type="subcellular location">
    <subcellularLocation>
        <location evidence="1">Cytoplasm</location>
    </subcellularLocation>
</comment>
<comment type="similarity">
    <text evidence="1">Belongs to the PTH family.</text>
</comment>
<gene>
    <name evidence="1" type="primary">pth</name>
    <name type="ordered locus">aq_346</name>
</gene>
<accession>O66677</accession>
<name>PTH_AQUAE</name>
<reference key="1">
    <citation type="journal article" date="1998" name="Nature">
        <title>The complete genome of the hyperthermophilic bacterium Aquifex aeolicus.</title>
        <authorList>
            <person name="Deckert G."/>
            <person name="Warren P.V."/>
            <person name="Gaasterland T."/>
            <person name="Young W.G."/>
            <person name="Lenox A.L."/>
            <person name="Graham D.E."/>
            <person name="Overbeek R."/>
            <person name="Snead M.A."/>
            <person name="Keller M."/>
            <person name="Aujay M."/>
            <person name="Huber R."/>
            <person name="Feldman R.A."/>
            <person name="Short J.M."/>
            <person name="Olsen G.J."/>
            <person name="Swanson R.V."/>
        </authorList>
    </citation>
    <scope>NUCLEOTIDE SEQUENCE [LARGE SCALE GENOMIC DNA]</scope>
    <source>
        <strain>VF5</strain>
    </source>
</reference>
<proteinExistence type="inferred from homology"/>